<organism>
    <name type="scientific">Corynebacterium glutamicum (strain R)</name>
    <dbReference type="NCBI Taxonomy" id="340322"/>
    <lineage>
        <taxon>Bacteria</taxon>
        <taxon>Bacillati</taxon>
        <taxon>Actinomycetota</taxon>
        <taxon>Actinomycetes</taxon>
        <taxon>Mycobacteriales</taxon>
        <taxon>Corynebacteriaceae</taxon>
        <taxon>Corynebacterium</taxon>
    </lineage>
</organism>
<sequence length="185" mass="20765">MIDEILFEAEERMTATVEHTREDLTTIRTGRANPAMFNGVMAEYYGVPTPITQMSSISVPEPRMLLIKPYEMSSMQVIENAIRNSDLGVNPTNDGQVLRVTIPQLTEERRKDMVKLAKGKGEDGKIAIRNIRRKGMDQLKKLQKDGDAGEDEVQAAEKELDKVTAGFVAQVDEVVARKEKELMEV</sequence>
<keyword id="KW-0963">Cytoplasm</keyword>
<keyword id="KW-0648">Protein biosynthesis</keyword>
<dbReference type="EMBL" id="AP009044">
    <property type="protein sequence ID" value="BAF54845.1"/>
    <property type="molecule type" value="Genomic_DNA"/>
</dbReference>
<dbReference type="RefSeq" id="WP_003857555.1">
    <property type="nucleotide sequence ID" value="NC_009342.1"/>
</dbReference>
<dbReference type="SMR" id="A4QF29"/>
<dbReference type="KEGG" id="cgt:cgR_1851"/>
<dbReference type="HOGENOM" id="CLU_073981_2_0_11"/>
<dbReference type="PhylomeDB" id="A4QF29"/>
<dbReference type="Proteomes" id="UP000006698">
    <property type="component" value="Chromosome"/>
</dbReference>
<dbReference type="GO" id="GO:0005737">
    <property type="term" value="C:cytoplasm"/>
    <property type="evidence" value="ECO:0007669"/>
    <property type="project" value="UniProtKB-SubCell"/>
</dbReference>
<dbReference type="GO" id="GO:0043023">
    <property type="term" value="F:ribosomal large subunit binding"/>
    <property type="evidence" value="ECO:0007669"/>
    <property type="project" value="TreeGrafter"/>
</dbReference>
<dbReference type="GO" id="GO:0006415">
    <property type="term" value="P:translational termination"/>
    <property type="evidence" value="ECO:0007669"/>
    <property type="project" value="UniProtKB-UniRule"/>
</dbReference>
<dbReference type="CDD" id="cd00520">
    <property type="entry name" value="RRF"/>
    <property type="match status" value="1"/>
</dbReference>
<dbReference type="FunFam" id="1.10.132.20:FF:000001">
    <property type="entry name" value="Ribosome-recycling factor"/>
    <property type="match status" value="1"/>
</dbReference>
<dbReference type="FunFam" id="3.30.1360.40:FF:000001">
    <property type="entry name" value="Ribosome-recycling factor"/>
    <property type="match status" value="1"/>
</dbReference>
<dbReference type="Gene3D" id="3.30.1360.40">
    <property type="match status" value="1"/>
</dbReference>
<dbReference type="Gene3D" id="1.10.132.20">
    <property type="entry name" value="Ribosome-recycling factor"/>
    <property type="match status" value="1"/>
</dbReference>
<dbReference type="HAMAP" id="MF_00040">
    <property type="entry name" value="RRF"/>
    <property type="match status" value="1"/>
</dbReference>
<dbReference type="InterPro" id="IPR002661">
    <property type="entry name" value="Ribosome_recyc_fac"/>
</dbReference>
<dbReference type="InterPro" id="IPR023584">
    <property type="entry name" value="Ribosome_recyc_fac_dom"/>
</dbReference>
<dbReference type="InterPro" id="IPR036191">
    <property type="entry name" value="RRF_sf"/>
</dbReference>
<dbReference type="NCBIfam" id="TIGR00496">
    <property type="entry name" value="frr"/>
    <property type="match status" value="1"/>
</dbReference>
<dbReference type="PANTHER" id="PTHR20982:SF3">
    <property type="entry name" value="MITOCHONDRIAL RIBOSOME RECYCLING FACTOR PSEUDO 1"/>
    <property type="match status" value="1"/>
</dbReference>
<dbReference type="PANTHER" id="PTHR20982">
    <property type="entry name" value="RIBOSOME RECYCLING FACTOR"/>
    <property type="match status" value="1"/>
</dbReference>
<dbReference type="Pfam" id="PF01765">
    <property type="entry name" value="RRF"/>
    <property type="match status" value="1"/>
</dbReference>
<dbReference type="SUPFAM" id="SSF55194">
    <property type="entry name" value="Ribosome recycling factor, RRF"/>
    <property type="match status" value="1"/>
</dbReference>
<gene>
    <name evidence="1" type="primary">frr</name>
    <name type="ordered locus">cgR_1851</name>
</gene>
<comment type="function">
    <text evidence="1">Responsible for the release of ribosomes from messenger RNA at the termination of protein biosynthesis. May increase the efficiency of translation by recycling ribosomes from one round of translation to another.</text>
</comment>
<comment type="subcellular location">
    <subcellularLocation>
        <location evidence="1">Cytoplasm</location>
    </subcellularLocation>
</comment>
<comment type="similarity">
    <text evidence="1">Belongs to the RRF family.</text>
</comment>
<reference key="1">
    <citation type="journal article" date="2007" name="Microbiology">
        <title>Comparative analysis of the Corynebacterium glutamicum group and complete genome sequence of strain R.</title>
        <authorList>
            <person name="Yukawa H."/>
            <person name="Omumasaba C.A."/>
            <person name="Nonaka H."/>
            <person name="Kos P."/>
            <person name="Okai N."/>
            <person name="Suzuki N."/>
            <person name="Suda M."/>
            <person name="Tsuge Y."/>
            <person name="Watanabe J."/>
            <person name="Ikeda Y."/>
            <person name="Vertes A.A."/>
            <person name="Inui M."/>
        </authorList>
    </citation>
    <scope>NUCLEOTIDE SEQUENCE [LARGE SCALE GENOMIC DNA]</scope>
    <source>
        <strain>R</strain>
    </source>
</reference>
<proteinExistence type="inferred from homology"/>
<evidence type="ECO:0000255" key="1">
    <source>
        <dbReference type="HAMAP-Rule" id="MF_00040"/>
    </source>
</evidence>
<feature type="chain" id="PRO_1000003148" description="Ribosome-recycling factor">
    <location>
        <begin position="1"/>
        <end position="185"/>
    </location>
</feature>
<protein>
    <recommendedName>
        <fullName evidence="1">Ribosome-recycling factor</fullName>
        <shortName evidence="1">RRF</shortName>
    </recommendedName>
    <alternativeName>
        <fullName evidence="1">Ribosome-releasing factor</fullName>
    </alternativeName>
</protein>
<name>RRF_CORGB</name>
<accession>A4QF29</accession>